<comment type="function">
    <text evidence="3">Catalyzes the oxidation of carveol to carvone, with a strong stereoselectivity since it efficiently converts only the (6S)-stereoisomers, of which (-)-(4R,6S)-trans-carveol is the better substrate. Displays a broad substrate specificity with a preference for substituted cyclohexanols, and does not catalyze the oxidation of primary or short chain aliphatic secondary alcohols. Is also able, albeit more slowly, to oxidize limonene-1,2-diol into 1-hydroxy-2-oxolimonene.</text>
</comment>
<comment type="catalytic activity">
    <reaction evidence="3">
        <text>(1S,5R)-carveol + NAD(+) = (R)-carvone + NADH + H(+)</text>
        <dbReference type="Rhea" id="RHEA:25844"/>
        <dbReference type="ChEBI" id="CHEBI:15378"/>
        <dbReference type="ChEBI" id="CHEBI:15389"/>
        <dbReference type="ChEBI" id="CHEBI:15400"/>
        <dbReference type="ChEBI" id="CHEBI:57540"/>
        <dbReference type="ChEBI" id="CHEBI:57945"/>
        <dbReference type="EC" id="1.1.1.n4"/>
    </reaction>
</comment>
<comment type="catalytic activity">
    <reaction evidence="3">
        <text>(1S,5S)-carveol + NAD(+) = (S)-carvone + NADH + H(+)</text>
        <dbReference type="Rhea" id="RHEA:25848"/>
        <dbReference type="ChEBI" id="CHEBI:232"/>
        <dbReference type="ChEBI" id="CHEBI:15378"/>
        <dbReference type="ChEBI" id="CHEBI:15399"/>
        <dbReference type="ChEBI" id="CHEBI:57540"/>
        <dbReference type="ChEBI" id="CHEBI:57945"/>
        <dbReference type="EC" id="1.1.1.n4"/>
    </reaction>
</comment>
<comment type="activity regulation">
    <text evidence="3">Competitively inhibited by the product (S)- or (R)-carvone.</text>
</comment>
<comment type="biophysicochemical properties">
    <kinetics>
        <KM evidence="3">0.041 mM for (4R,6S)-carveol</KM>
        <KM evidence="3">0.39 mM for (4S,6S)-carveol</KM>
        <KM evidence="3">0.35 mM for (4R,6R)-carveol</KM>
        <KM evidence="3">2 mM for (4S,6R)-carveol</KM>
        <Vmax evidence="3">4200.0 nmol/min/mg enzyme with (4R,6S)-carveol as substrate</Vmax>
        <Vmax evidence="3">3870.0 nmol/min/mg enzyme with (4S,6S)-carveol as substrate</Vmax>
        <Vmax evidence="3">1450.0 nmol/min/mg enzyme with (4R,6R)-carveol as substrate</Vmax>
        <Vmax evidence="3">1320.0 nmol/min/mg enzyme with (4S,6R)-carveol as substrate</Vmax>
    </kinetics>
    <phDependence>
        <text evidence="3">Optimum pH is 5.5. Shows 25% of the optimal activity at pH 4.6 and 7.0.</text>
    </phDependence>
    <temperatureDependence>
        <text evidence="3">Optimum temperature is 50 degrees Celsius.</text>
    </temperatureDependence>
</comment>
<comment type="pathway">
    <text>Terpene metabolism; limonene degradation.</text>
</comment>
<comment type="subunit">
    <text evidence="3">Homotetramer.</text>
</comment>
<comment type="induction">
    <text evidence="3">By limonene and carveol.</text>
</comment>
<comment type="miscellaneous">
    <text>In vitro, is only active in the presence of the artificial electron acceptor dichlorophenolindophenol (DCPIP). The physiological electron acceptor that is used to regenerate NAD(+) in vivo is unknown.</text>
</comment>
<comment type="similarity">
    <text evidence="4">Belongs to the short-chain dehydrogenases/reductases (SDR) family.</text>
</comment>
<accession>Q9RA05</accession>
<sequence>MARVEGQVALITGAARGQGRSHAIKLAEEGADVILVDVPNDVVDIGYPLGTADELDQTAKDVENLGRKAIVIHADVRDLESLTAEVDRAVSTLGRLDIVSANAGIASVPFLSHDIPDNTWRQMIDINLTGVWHTAKVAVPHILAGERGGSIVLTSSAAGLKGYAQISHYSAAKHGVVGLMRSLALELAPHRVRVNSLHPTQVNTPMIQNEGTYRIFSPDLENPTREDFEIASTTTNALPIPWVESVDVSNALLFLVSEDARYITGAAIPVDAGTTLK</sequence>
<gene>
    <name type="primary">limC</name>
</gene>
<reference key="1">
    <citation type="journal article" date="1999" name="J. Biol. Chem.">
        <title>Stereoselective carveol dehydrogenase from Rhodococcus erythropolis DCL14. A novel nicotinoprotein belonging to the short-chain dehydrogenase/reductase superfamily.</title>
        <authorList>
            <person name="van der Werf M.J."/>
            <person name="van der Ven C."/>
            <person name="Barbirato F."/>
            <person name="Eppink M.H.M."/>
            <person name="de Bont J.A.M."/>
            <person name="van Berkel W.J.H."/>
        </authorList>
    </citation>
    <scope>NUCLEOTIDE SEQUENCE [GENOMIC DNA]</scope>
    <scope>PROTEIN SEQUENCE OF 2-30</scope>
    <scope>FUNCTION</scope>
    <scope>CATALYTIC ACTIVITY</scope>
    <scope>SUBSTRATE SPECIFICITY</scope>
    <scope>STEREOSPECIFICITY</scope>
    <scope>ACTIVITY REGULATION</scope>
    <scope>INDUCTION</scope>
    <scope>SUBUNIT</scope>
    <scope>BIOPHYSICOCHEMICAL PROPERTIES</scope>
    <source>
        <strain>DCL 14</strain>
    </source>
</reference>
<reference key="2">
    <citation type="submission" date="2000-07" db="EMBL/GenBank/DDBJ databases">
        <title>Genetic analysis of the lim operon of Rhodococcus erythropolis DCL14.</title>
        <authorList>
            <person name="Van der Vlugt-Bergmans C.J.B."/>
            <person name="van der Werf M.J."/>
        </authorList>
    </citation>
    <scope>NUCLEOTIDE SEQUENCE [GENOMIC DNA]</scope>
    <source>
        <strain>DCL 14</strain>
    </source>
</reference>
<evidence type="ECO:0000250" key="1"/>
<evidence type="ECO:0000255" key="2">
    <source>
        <dbReference type="PROSITE-ProRule" id="PRU10001"/>
    </source>
</evidence>
<evidence type="ECO:0000269" key="3">
    <source>
    </source>
</evidence>
<evidence type="ECO:0000305" key="4"/>
<organism>
    <name type="scientific">Rhodococcus erythropolis</name>
    <name type="common">Arthrobacter picolinophilus</name>
    <dbReference type="NCBI Taxonomy" id="1833"/>
    <lineage>
        <taxon>Bacteria</taxon>
        <taxon>Bacillati</taxon>
        <taxon>Actinomycetota</taxon>
        <taxon>Actinomycetes</taxon>
        <taxon>Mycobacteriales</taxon>
        <taxon>Nocardiaceae</taxon>
        <taxon>Rhodococcus</taxon>
        <taxon>Rhodococcus erythropolis group</taxon>
    </lineage>
</organism>
<feature type="initiator methionine" description="Removed" evidence="3">
    <location>
        <position position="1"/>
    </location>
</feature>
<feature type="chain" id="PRO_0000054718" description="(-)-trans-carveol dehydrogenase">
    <location>
        <begin position="2"/>
        <end position="277"/>
    </location>
</feature>
<feature type="active site" description="Proton acceptor" evidence="2">
    <location>
        <position position="169"/>
    </location>
</feature>
<feature type="binding site" evidence="1">
    <location>
        <begin position="10"/>
        <end position="32"/>
    </location>
    <ligand>
        <name>NAD(+)</name>
        <dbReference type="ChEBI" id="CHEBI:57540"/>
    </ligand>
</feature>
<feature type="binding site" evidence="1">
    <location>
        <position position="156"/>
    </location>
    <ligand>
        <name>substrate</name>
    </ligand>
</feature>
<name>LIMC_RHOER</name>
<dbReference type="EC" id="1.1.1.n4"/>
<dbReference type="EMBL" id="AJ006869">
    <property type="protein sequence ID" value="CAB54559.1"/>
    <property type="molecule type" value="Genomic_DNA"/>
</dbReference>
<dbReference type="EMBL" id="AJ272366">
    <property type="protein sequence ID" value="CAC20856.1"/>
    <property type="molecule type" value="Genomic_DNA"/>
</dbReference>
<dbReference type="SMR" id="Q9RA05"/>
<dbReference type="KEGG" id="ag:CAB54559"/>
<dbReference type="BioCyc" id="MetaCyc:MONOMER-13961"/>
<dbReference type="UniPathway" id="UPA00888"/>
<dbReference type="GO" id="GO:0016491">
    <property type="term" value="F:oxidoreductase activity"/>
    <property type="evidence" value="ECO:0007669"/>
    <property type="project" value="UniProtKB-KW"/>
</dbReference>
<dbReference type="GO" id="GO:0046251">
    <property type="term" value="P:limonene catabolic process"/>
    <property type="evidence" value="ECO:0007669"/>
    <property type="project" value="UniProtKB-UniPathway"/>
</dbReference>
<dbReference type="CDD" id="cd05233">
    <property type="entry name" value="SDR_c"/>
    <property type="match status" value="1"/>
</dbReference>
<dbReference type="FunFam" id="3.40.50.720:FF:000084">
    <property type="entry name" value="Short-chain dehydrogenase reductase"/>
    <property type="match status" value="1"/>
</dbReference>
<dbReference type="Gene3D" id="3.40.50.720">
    <property type="entry name" value="NAD(P)-binding Rossmann-like Domain"/>
    <property type="match status" value="1"/>
</dbReference>
<dbReference type="InterPro" id="IPR036291">
    <property type="entry name" value="NAD(P)-bd_dom_sf"/>
</dbReference>
<dbReference type="InterPro" id="IPR020904">
    <property type="entry name" value="Sc_DH/Rdtase_CS"/>
</dbReference>
<dbReference type="InterPro" id="IPR002347">
    <property type="entry name" value="SDR_fam"/>
</dbReference>
<dbReference type="InterPro" id="IPR023985">
    <property type="entry name" value="SDR_subfam_1"/>
</dbReference>
<dbReference type="NCBIfam" id="NF009467">
    <property type="entry name" value="PRK12826.1-3"/>
    <property type="match status" value="1"/>
</dbReference>
<dbReference type="NCBIfam" id="TIGR03971">
    <property type="entry name" value="SDR_subfam_1"/>
    <property type="match status" value="1"/>
</dbReference>
<dbReference type="PANTHER" id="PTHR24321">
    <property type="entry name" value="DEHYDROGENASES, SHORT CHAIN"/>
    <property type="match status" value="1"/>
</dbReference>
<dbReference type="PANTHER" id="PTHR24321:SF8">
    <property type="entry name" value="ESTRADIOL 17-BETA-DEHYDROGENASE 8-RELATED"/>
    <property type="match status" value="1"/>
</dbReference>
<dbReference type="Pfam" id="PF00106">
    <property type="entry name" value="adh_short"/>
    <property type="match status" value="1"/>
</dbReference>
<dbReference type="PRINTS" id="PR00081">
    <property type="entry name" value="GDHRDH"/>
</dbReference>
<dbReference type="PRINTS" id="PR00080">
    <property type="entry name" value="SDRFAMILY"/>
</dbReference>
<dbReference type="SUPFAM" id="SSF51735">
    <property type="entry name" value="NAD(P)-binding Rossmann-fold domains"/>
    <property type="match status" value="1"/>
</dbReference>
<dbReference type="PROSITE" id="PS00061">
    <property type="entry name" value="ADH_SHORT"/>
    <property type="match status" value="1"/>
</dbReference>
<proteinExistence type="evidence at protein level"/>
<keyword id="KW-0903">Direct protein sequencing</keyword>
<keyword id="KW-0520">NAD</keyword>
<keyword id="KW-0560">Oxidoreductase</keyword>
<protein>
    <recommendedName>
        <fullName>(-)-trans-carveol dehydrogenase</fullName>
        <ecNumber>1.1.1.n4</ecNumber>
    </recommendedName>
    <alternativeName>
        <fullName>(4R,6S)-carveol dehydrogenase</fullName>
        <shortName>CDH</shortName>
        <shortName>Carveol dehydrogenase</shortName>
    </alternativeName>
</protein>